<feature type="chain" id="PRO_0000219184" description="Beta-1,3-N-acetylglucosaminyltransferase manic fringe">
    <location>
        <begin position="1"/>
        <end position="321"/>
    </location>
</feature>
<feature type="topological domain" description="Cytoplasmic" evidence="3">
    <location>
        <begin position="1"/>
        <end position="7"/>
    </location>
</feature>
<feature type="transmembrane region" description="Helical; Signal-anchor for type II membrane protein" evidence="3">
    <location>
        <begin position="8"/>
        <end position="27"/>
    </location>
</feature>
<feature type="topological domain" description="Lumenal" evidence="3">
    <location>
        <begin position="28"/>
        <end position="321"/>
    </location>
</feature>
<feature type="active site" evidence="1">
    <location>
        <position position="232"/>
    </location>
</feature>
<feature type="binding site" evidence="1">
    <location>
        <position position="70"/>
    </location>
    <ligand>
        <name>substrate</name>
    </ligand>
</feature>
<feature type="binding site" evidence="1">
    <location>
        <position position="143"/>
    </location>
    <ligand>
        <name>substrate</name>
    </ligand>
</feature>
<feature type="binding site" evidence="1">
    <location>
        <position position="144"/>
    </location>
    <ligand>
        <name>Mn(2+)</name>
        <dbReference type="ChEBI" id="CHEBI:29035"/>
    </ligand>
</feature>
<feature type="binding site" evidence="1">
    <location>
        <position position="256"/>
    </location>
    <ligand>
        <name>Mn(2+)</name>
        <dbReference type="ChEBI" id="CHEBI:29035"/>
    </ligand>
</feature>
<feature type="glycosylation site" description="N-linked (GlcNAc...) asparagine" evidence="3">
    <location>
        <position position="109"/>
    </location>
</feature>
<feature type="glycosylation site" description="N-linked (GlcNAc...) asparagine" evidence="3">
    <location>
        <position position="185"/>
    </location>
</feature>
<feature type="disulfide bond" evidence="1">
    <location>
        <begin position="110"/>
        <end position="121"/>
    </location>
</feature>
<feature type="disulfide bond" evidence="1">
    <location>
        <begin position="139"/>
        <end position="202"/>
    </location>
</feature>
<feature type="disulfide bond" evidence="1">
    <location>
        <begin position="306"/>
        <end position="315"/>
    </location>
</feature>
<gene>
    <name type="primary">MFNG</name>
</gene>
<name>MFNG_PANTR</name>
<reference key="1">
    <citation type="journal article" date="2004" name="Cell">
        <title>Accelerated evolution of nervous system genes in the origin of Homo sapiens.</title>
        <authorList>
            <person name="Dorus S."/>
            <person name="Vallender E.J."/>
            <person name="Evans P.D."/>
            <person name="Anderson J.R."/>
            <person name="Gilbert S.L."/>
            <person name="Mahowald M."/>
            <person name="Wyckoff G.J."/>
            <person name="Malcom C.M."/>
            <person name="Lahn B.T."/>
        </authorList>
    </citation>
    <scope>NUCLEOTIDE SEQUENCE [MRNA]</scope>
</reference>
<accession>Q5IS64</accession>
<organism>
    <name type="scientific">Pan troglodytes</name>
    <name type="common">Chimpanzee</name>
    <dbReference type="NCBI Taxonomy" id="9598"/>
    <lineage>
        <taxon>Eukaryota</taxon>
        <taxon>Metazoa</taxon>
        <taxon>Chordata</taxon>
        <taxon>Craniata</taxon>
        <taxon>Vertebrata</taxon>
        <taxon>Euteleostomi</taxon>
        <taxon>Mammalia</taxon>
        <taxon>Eutheria</taxon>
        <taxon>Euarchontoglires</taxon>
        <taxon>Primates</taxon>
        <taxon>Haplorrhini</taxon>
        <taxon>Catarrhini</taxon>
        <taxon>Hominidae</taxon>
        <taxon>Pan</taxon>
    </lineage>
</organism>
<dbReference type="EC" id="2.4.1.222" evidence="2"/>
<dbReference type="EMBL" id="AY665264">
    <property type="protein sequence ID" value="AAV74302.1"/>
    <property type="molecule type" value="mRNA"/>
</dbReference>
<dbReference type="RefSeq" id="NP_001012433.1">
    <property type="nucleotide sequence ID" value="NM_001012431.1"/>
</dbReference>
<dbReference type="RefSeq" id="XP_016794235.1">
    <property type="nucleotide sequence ID" value="XM_016938746.4"/>
</dbReference>
<dbReference type="SMR" id="Q5IS64"/>
<dbReference type="FunCoup" id="Q5IS64">
    <property type="interactions" value="242"/>
</dbReference>
<dbReference type="STRING" id="9598.ENSPTRP00000071868"/>
<dbReference type="CAZy" id="GT31">
    <property type="family name" value="Glycosyltransferase Family 31"/>
</dbReference>
<dbReference type="GlyCosmos" id="Q5IS64">
    <property type="glycosylation" value="2 sites, No reported glycans"/>
</dbReference>
<dbReference type="Ensembl" id="ENSPTRT00000095465.1">
    <property type="protein sequence ID" value="ENSPTRP00000071868.1"/>
    <property type="gene ID" value="ENSPTRG00000014335.7"/>
</dbReference>
<dbReference type="GeneID" id="458811"/>
<dbReference type="KEGG" id="ptr:458811"/>
<dbReference type="CTD" id="4242"/>
<dbReference type="VGNC" id="VGNC:57463">
    <property type="gene designation" value="MFNG"/>
</dbReference>
<dbReference type="GeneTree" id="ENSGT00940000159564"/>
<dbReference type="InParanoid" id="Q5IS64"/>
<dbReference type="Proteomes" id="UP000002277">
    <property type="component" value="Chromosome 22"/>
</dbReference>
<dbReference type="Bgee" id="ENSPTRG00000014335">
    <property type="expression patterns" value="Expressed in lymph node and 17 other cell types or tissues"/>
</dbReference>
<dbReference type="GO" id="GO:0000139">
    <property type="term" value="C:Golgi membrane"/>
    <property type="evidence" value="ECO:0007669"/>
    <property type="project" value="UniProtKB-SubCell"/>
</dbReference>
<dbReference type="GO" id="GO:0046872">
    <property type="term" value="F:metal ion binding"/>
    <property type="evidence" value="ECO:0007669"/>
    <property type="project" value="UniProtKB-KW"/>
</dbReference>
<dbReference type="GO" id="GO:0033829">
    <property type="term" value="F:O-fucosylpeptide 3-beta-N-acetylglucosaminyltransferase activity"/>
    <property type="evidence" value="ECO:0000250"/>
    <property type="project" value="UniProtKB"/>
</dbReference>
<dbReference type="GO" id="GO:0001825">
    <property type="term" value="P:blastocyst formation"/>
    <property type="evidence" value="ECO:0007669"/>
    <property type="project" value="Ensembl"/>
</dbReference>
<dbReference type="GO" id="GO:0002315">
    <property type="term" value="P:marginal zone B cell differentiation"/>
    <property type="evidence" value="ECO:0000250"/>
    <property type="project" value="UniProtKB"/>
</dbReference>
<dbReference type="GO" id="GO:0007389">
    <property type="term" value="P:pattern specification process"/>
    <property type="evidence" value="ECO:0007669"/>
    <property type="project" value="InterPro"/>
</dbReference>
<dbReference type="GO" id="GO:0045747">
    <property type="term" value="P:positive regulation of Notch signaling pathway"/>
    <property type="evidence" value="ECO:0007669"/>
    <property type="project" value="Ensembl"/>
</dbReference>
<dbReference type="GO" id="GO:0008593">
    <property type="term" value="P:regulation of Notch signaling pathway"/>
    <property type="evidence" value="ECO:0000250"/>
    <property type="project" value="UniProtKB"/>
</dbReference>
<dbReference type="FunFam" id="3.90.550.50:FF:000003">
    <property type="entry name" value="Beta-1,3-N-acetylglucosaminyltransferase"/>
    <property type="match status" value="1"/>
</dbReference>
<dbReference type="Gene3D" id="3.90.550.50">
    <property type="match status" value="1"/>
</dbReference>
<dbReference type="InterPro" id="IPR017374">
    <property type="entry name" value="Fringe"/>
</dbReference>
<dbReference type="InterPro" id="IPR003378">
    <property type="entry name" value="Fringe-like_glycosylTrfase"/>
</dbReference>
<dbReference type="PANTHER" id="PTHR10811">
    <property type="entry name" value="FRINGE-RELATED"/>
    <property type="match status" value="1"/>
</dbReference>
<dbReference type="Pfam" id="PF02434">
    <property type="entry name" value="Fringe"/>
    <property type="match status" value="1"/>
</dbReference>
<dbReference type="PIRSF" id="PIRSF038073">
    <property type="entry name" value="B-acetylgalactosaminyltfrase"/>
    <property type="match status" value="1"/>
</dbReference>
<protein>
    <recommendedName>
        <fullName evidence="4">Beta-1,3-N-acetylglucosaminyltransferase manic fringe</fullName>
        <ecNumber evidence="2">2.4.1.222</ecNumber>
    </recommendedName>
    <alternativeName>
        <fullName>O-fucosylpeptide 3-beta-N-acetylglucosaminyltransferase</fullName>
    </alternativeName>
</protein>
<evidence type="ECO:0000250" key="1"/>
<evidence type="ECO:0000250" key="2">
    <source>
        <dbReference type="UniProtKB" id="O09008"/>
    </source>
</evidence>
<evidence type="ECO:0000255" key="3"/>
<evidence type="ECO:0000305" key="4"/>
<keyword id="KW-0217">Developmental protein</keyword>
<keyword id="KW-1015">Disulfide bond</keyword>
<keyword id="KW-0325">Glycoprotein</keyword>
<keyword id="KW-0328">Glycosyltransferase</keyword>
<keyword id="KW-0333">Golgi apparatus</keyword>
<keyword id="KW-0464">Manganese</keyword>
<keyword id="KW-0472">Membrane</keyword>
<keyword id="KW-0479">Metal-binding</keyword>
<keyword id="KW-1185">Reference proteome</keyword>
<keyword id="KW-0735">Signal-anchor</keyword>
<keyword id="KW-0808">Transferase</keyword>
<keyword id="KW-0812">Transmembrane</keyword>
<keyword id="KW-1133">Transmembrane helix</keyword>
<comment type="function">
    <text evidence="2">Glycosyltransferase that initiates the elongation of O-linked fucose residues attached to EGF-like repeats in the extracellular domain of Notch molecules. Modulates NOTCH1 activity by modifying O-fucose residues at specific EGF-like domains resulting in inhibition of NOTCH1 activation by JAG1 and enhancement of NOTCH1 activation by DLL1 via an increase in its binding to DLL1.</text>
</comment>
<comment type="catalytic activity">
    <reaction evidence="2">
        <text>3-O-(alpha-L-fucosyl)-L-threonyl-[EGF-like domain protein] + UDP-N-acetyl-alpha-D-glucosamine = 3-O-(N-acetyl-beta-D-glucosaminyl-(1-&gt;3)-alpha-L-fucosyl)-L-threonyl-[EGF-like domain protein] + UDP + H(+)</text>
        <dbReference type="Rhea" id="RHEA:70531"/>
        <dbReference type="Rhea" id="RHEA-COMP:17922"/>
        <dbReference type="Rhea" id="RHEA-COMP:17923"/>
        <dbReference type="ChEBI" id="CHEBI:15378"/>
        <dbReference type="ChEBI" id="CHEBI:57705"/>
        <dbReference type="ChEBI" id="CHEBI:58223"/>
        <dbReference type="ChEBI" id="CHEBI:189631"/>
        <dbReference type="ChEBI" id="CHEBI:189634"/>
        <dbReference type="EC" id="2.4.1.222"/>
    </reaction>
</comment>
<comment type="catalytic activity">
    <reaction evidence="2">
        <text>3-O-(alpha-L-fucosyl)-L-seryl-[EGF-like domain protein] + UDP-N-acetyl-alpha-D-glucosamine = 3-O-(N-acetyl-beta-D-glucosaminyl-(1-&gt;3)-alpha-L-fucosyl)-L-seryl-[EGF-like domain protein] + UDP + H(+)</text>
        <dbReference type="Rhea" id="RHEA:70511"/>
        <dbReference type="Rhea" id="RHEA-COMP:17919"/>
        <dbReference type="Rhea" id="RHEA-COMP:17920"/>
        <dbReference type="ChEBI" id="CHEBI:15378"/>
        <dbReference type="ChEBI" id="CHEBI:57705"/>
        <dbReference type="ChEBI" id="CHEBI:58223"/>
        <dbReference type="ChEBI" id="CHEBI:189632"/>
        <dbReference type="ChEBI" id="CHEBI:189633"/>
        <dbReference type="EC" id="2.4.1.222"/>
    </reaction>
</comment>
<comment type="cofactor">
    <cofactor evidence="2">
        <name>Mn(2+)</name>
        <dbReference type="ChEBI" id="CHEBI:29035"/>
    </cofactor>
    <text evidence="2">Has some activity with cobalt, magnesium and calcium, but not zinc.</text>
</comment>
<comment type="subcellular location">
    <subcellularLocation>
        <location evidence="1">Golgi apparatus membrane</location>
        <topology evidence="1">Single-pass type II membrane protein</topology>
    </subcellularLocation>
</comment>
<comment type="similarity">
    <text evidence="4">Belongs to the glycosyltransferase 31 family.</text>
</comment>
<sequence>MQCRLPRGLAGALLTLLCMGLLCLRYHLNLSPQRVQETPELRQPNPGPPELQLHDVFIAVKTTRAFHRLRLELLLDTWVSRTREQTFVFTDSPDKGLQERLGSHLVVTNCSAEHSHPALSCKMAAEFDTFLASGLRWFCHVDDDNYVNPRALLQLLRAFPLAHDVYVGRPSLNRPIHASEPQPHNRTRLVQFWFATGGAGFCINRRLALKMAPWASGSRFMDTSALIRLPDDCTMGYIIECKLGGRLQPSPLFHSHLETLQLLRTAQLPEQVTLSYGVFEGKLNVIKLQGPFSPEEDPSRFRSLHCLLYPDTPWCPQLGAR</sequence>
<proteinExistence type="evidence at transcript level"/>